<accession>Q0DR28</accession>
<accession>A0A0P0VYX2</accession>
<accession>Q84MF6</accession>
<name>PUB57_ORYSJ</name>
<feature type="chain" id="PRO_0000397691" description="U-box domain-containing protein 57">
    <location>
        <begin position="1"/>
        <end position="518"/>
    </location>
</feature>
<feature type="domain" description="Protein kinase" evidence="2">
    <location>
        <begin position="159"/>
        <end position="409"/>
    </location>
</feature>
<feature type="domain" description="U-box">
    <location>
        <begin position="434"/>
        <end position="508"/>
    </location>
</feature>
<feature type="coiled-coil region" evidence="1">
    <location>
        <begin position="86"/>
        <end position="142"/>
    </location>
</feature>
<feature type="sequence conflict" description="In Ref. 5; AK069682." evidence="4" ref="5">
    <original>H</original>
    <variation>R</variation>
    <location>
        <position position="41"/>
    </location>
</feature>
<feature type="sequence conflict" description="In Ref. 5; AK069682." evidence="4" ref="5">
    <original>G</original>
    <variation>E</variation>
    <location>
        <position position="500"/>
    </location>
</feature>
<protein>
    <recommendedName>
        <fullName>U-box domain-containing protein 57</fullName>
        <ecNumber>2.3.2.27</ecNumber>
    </recommendedName>
    <alternativeName>
        <fullName>Plant U-box protein 57</fullName>
        <shortName>OsPUB57</shortName>
    </alternativeName>
    <alternativeName>
        <fullName evidence="4">RING-type E3 ubiquitin transferase PUB57</fullName>
    </alternativeName>
</protein>
<sequence>MQTGFSNSRMNSFISSVLVLHFNKQEIKFEPSVWCEAIDIHNTFSAGEIITGDIICFQKILKPPDIPKYPSVASFLQHVCDRKTYEEVRKVHILEEEIVTLKHQADTYLVQKEKAVTAYDQLKHERDNAVQQVNELRDQSTHIILDFSRKDMEQATEHFKNAREVGDTEYGHTYKGMIHNMKVLIKLSSSQKLFQQEVSILRQWRHPNIITFIGVCSEVSALVYEWLPNGNLEDRIICTNNSAPLSWYNRTQIIGEICCALLFLHSNKSTALVHGDLRPCNILIDANYRSKICNFGMSNLFLQLGTFPPNLTARLPYMDPEFNTTGELTTLSDVYSLGVIILRLLTGMPPLTLSEKVAEALGSDSLHLLIDKSAGDWPYIEAKQLALIGLSCTGMTRKKRPDLLNEVWIVIEPLTRKPPAATWPYLQSASGDSSVPAAFICPISMEIMKDPQVASDGFTYEAEAIRCWFDRGISRSPMTNLALPNLNLVPNRVLRSFIHGYLQQQQPNPAYQQQLSET</sequence>
<organism>
    <name type="scientific">Oryza sativa subsp. japonica</name>
    <name type="common">Rice</name>
    <dbReference type="NCBI Taxonomy" id="39947"/>
    <lineage>
        <taxon>Eukaryota</taxon>
        <taxon>Viridiplantae</taxon>
        <taxon>Streptophyta</taxon>
        <taxon>Embryophyta</taxon>
        <taxon>Tracheophyta</taxon>
        <taxon>Spermatophyta</taxon>
        <taxon>Magnoliopsida</taxon>
        <taxon>Liliopsida</taxon>
        <taxon>Poales</taxon>
        <taxon>Poaceae</taxon>
        <taxon>BOP clade</taxon>
        <taxon>Oryzoideae</taxon>
        <taxon>Oryzeae</taxon>
        <taxon>Oryzinae</taxon>
        <taxon>Oryza</taxon>
        <taxon>Oryza sativa</taxon>
    </lineage>
</organism>
<proteinExistence type="evidence at transcript level"/>
<reference key="1">
    <citation type="journal article" date="2005" name="Genome Res.">
        <title>Sequence, annotation, and analysis of synteny between rice chromosome 3 and diverged grass species.</title>
        <authorList>
            <consortium name="The rice chromosome 3 sequencing consortium"/>
            <person name="Buell C.R."/>
            <person name="Yuan Q."/>
            <person name="Ouyang S."/>
            <person name="Liu J."/>
            <person name="Zhu W."/>
            <person name="Wang A."/>
            <person name="Maiti R."/>
            <person name="Haas B."/>
            <person name="Wortman J."/>
            <person name="Pertea M."/>
            <person name="Jones K.M."/>
            <person name="Kim M."/>
            <person name="Overton L."/>
            <person name="Tsitrin T."/>
            <person name="Fadrosh D."/>
            <person name="Bera J."/>
            <person name="Weaver B."/>
            <person name="Jin S."/>
            <person name="Johri S."/>
            <person name="Reardon M."/>
            <person name="Webb K."/>
            <person name="Hill J."/>
            <person name="Moffat K."/>
            <person name="Tallon L."/>
            <person name="Van Aken S."/>
            <person name="Lewis M."/>
            <person name="Utterback T."/>
            <person name="Feldblyum T."/>
            <person name="Zismann V."/>
            <person name="Iobst S."/>
            <person name="Hsiao J."/>
            <person name="de Vazeille A.R."/>
            <person name="Salzberg S.L."/>
            <person name="White O."/>
            <person name="Fraser C.M."/>
            <person name="Yu Y."/>
            <person name="Kim H."/>
            <person name="Rambo T."/>
            <person name="Currie J."/>
            <person name="Collura K."/>
            <person name="Kernodle-Thompson S."/>
            <person name="Wei F."/>
            <person name="Kudrna K."/>
            <person name="Ammiraju J.S.S."/>
            <person name="Luo M."/>
            <person name="Goicoechea J.L."/>
            <person name="Wing R.A."/>
            <person name="Henry D."/>
            <person name="Oates R."/>
            <person name="Palmer M."/>
            <person name="Pries G."/>
            <person name="Saski C."/>
            <person name="Simmons J."/>
            <person name="Soderlund C."/>
            <person name="Nelson W."/>
            <person name="de la Bastide M."/>
            <person name="Spiegel L."/>
            <person name="Nascimento L."/>
            <person name="Huang E."/>
            <person name="Preston R."/>
            <person name="Zutavern T."/>
            <person name="Palmer L."/>
            <person name="O'Shaughnessy A."/>
            <person name="Dike S."/>
            <person name="McCombie W.R."/>
            <person name="Minx P."/>
            <person name="Cordum H."/>
            <person name="Wilson R."/>
            <person name="Jin W."/>
            <person name="Lee H.R."/>
            <person name="Jiang J."/>
            <person name="Jackson S."/>
        </authorList>
    </citation>
    <scope>NUCLEOTIDE SEQUENCE [LARGE SCALE GENOMIC DNA]</scope>
    <source>
        <strain>cv. Nipponbare</strain>
    </source>
</reference>
<reference key="2">
    <citation type="journal article" date="2005" name="Nature">
        <title>The map-based sequence of the rice genome.</title>
        <authorList>
            <consortium name="International rice genome sequencing project (IRGSP)"/>
        </authorList>
    </citation>
    <scope>NUCLEOTIDE SEQUENCE [LARGE SCALE GENOMIC DNA]</scope>
    <source>
        <strain>cv. Nipponbare</strain>
    </source>
</reference>
<reference key="3">
    <citation type="journal article" date="2008" name="Nucleic Acids Res.">
        <title>The rice annotation project database (RAP-DB): 2008 update.</title>
        <authorList>
            <consortium name="The rice annotation project (RAP)"/>
        </authorList>
    </citation>
    <scope>GENOME REANNOTATION</scope>
    <source>
        <strain>cv. Nipponbare</strain>
    </source>
</reference>
<reference key="4">
    <citation type="journal article" date="2013" name="Rice">
        <title>Improvement of the Oryza sativa Nipponbare reference genome using next generation sequence and optical map data.</title>
        <authorList>
            <person name="Kawahara Y."/>
            <person name="de la Bastide M."/>
            <person name="Hamilton J.P."/>
            <person name="Kanamori H."/>
            <person name="McCombie W.R."/>
            <person name="Ouyang S."/>
            <person name="Schwartz D.C."/>
            <person name="Tanaka T."/>
            <person name="Wu J."/>
            <person name="Zhou S."/>
            <person name="Childs K.L."/>
            <person name="Davidson R.M."/>
            <person name="Lin H."/>
            <person name="Quesada-Ocampo L."/>
            <person name="Vaillancourt B."/>
            <person name="Sakai H."/>
            <person name="Lee S.S."/>
            <person name="Kim J."/>
            <person name="Numa H."/>
            <person name="Itoh T."/>
            <person name="Buell C.R."/>
            <person name="Matsumoto T."/>
        </authorList>
    </citation>
    <scope>GENOME REANNOTATION</scope>
    <source>
        <strain>cv. Nipponbare</strain>
    </source>
</reference>
<reference key="5">
    <citation type="journal article" date="2003" name="Science">
        <title>Collection, mapping, and annotation of over 28,000 cDNA clones from japonica rice.</title>
        <authorList>
            <consortium name="The rice full-length cDNA consortium"/>
        </authorList>
    </citation>
    <scope>NUCLEOTIDE SEQUENCE [LARGE SCALE MRNA]</scope>
    <source>
        <strain>cv. Nipponbare</strain>
    </source>
</reference>
<reference key="6">
    <citation type="journal article" date="2008" name="Mol. Plant">
        <title>Classification, expression pattern, and E3 ligase activity assay of rice U-box-containing proteins.</title>
        <authorList>
            <person name="Zeng L.R."/>
            <person name="Park C.H."/>
            <person name="Venu R.C."/>
            <person name="Gough J."/>
            <person name="Wang G.L."/>
        </authorList>
    </citation>
    <scope>FUNCTION</scope>
    <scope>GENE FAMILY</scope>
    <scope>NOMENCLATURE</scope>
</reference>
<comment type="function">
    <text evidence="3">Possesses E3 ubiquitin-protein ligase in vitro. May be involved in cell death signaling.</text>
</comment>
<comment type="catalytic activity">
    <reaction>
        <text>S-ubiquitinyl-[E2 ubiquitin-conjugating enzyme]-L-cysteine + [acceptor protein]-L-lysine = [E2 ubiquitin-conjugating enzyme]-L-cysteine + N(6)-ubiquitinyl-[acceptor protein]-L-lysine.</text>
        <dbReference type="EC" id="2.3.2.27"/>
    </reaction>
</comment>
<comment type="pathway">
    <text>Protein modification; protein ubiquitination.</text>
</comment>
<comment type="domain">
    <text>The protein kinase domain is predicted to be catalytically inactive.</text>
</comment>
<comment type="sequence caution" evidence="4">
    <conflict type="erroneous gene model prediction">
        <sequence resource="EMBL-CDS" id="AAP20849"/>
    </conflict>
</comment>
<comment type="sequence caution" evidence="4">
    <conflict type="erroneous gene model prediction">
        <sequence resource="EMBL-CDS" id="ABF96696"/>
    </conflict>
</comment>
<dbReference type="EC" id="2.3.2.27"/>
<dbReference type="EMBL" id="AC114983">
    <property type="protein sequence ID" value="AAP20849.1"/>
    <property type="status" value="ALT_SEQ"/>
    <property type="molecule type" value="Genomic_DNA"/>
</dbReference>
<dbReference type="EMBL" id="DP000009">
    <property type="protein sequence ID" value="ABF96696.1"/>
    <property type="status" value="ALT_SEQ"/>
    <property type="molecule type" value="Genomic_DNA"/>
</dbReference>
<dbReference type="EMBL" id="AP008209">
    <property type="protein sequence ID" value="BAF12310.1"/>
    <property type="molecule type" value="Genomic_DNA"/>
</dbReference>
<dbReference type="EMBL" id="AP014959">
    <property type="protein sequence ID" value="BAS84766.1"/>
    <property type="molecule type" value="Genomic_DNA"/>
</dbReference>
<dbReference type="EMBL" id="AK069682">
    <property type="status" value="NOT_ANNOTATED_CDS"/>
    <property type="molecule type" value="mRNA"/>
</dbReference>
<dbReference type="SMR" id="Q0DR28"/>
<dbReference type="STRING" id="39947.Q0DR28"/>
<dbReference type="PaxDb" id="39947-Q0DR28"/>
<dbReference type="EnsemblPlants" id="Os03t0424200-01">
    <property type="protein sequence ID" value="Os03t0424200-01"/>
    <property type="gene ID" value="Os03g0424200"/>
</dbReference>
<dbReference type="Gramene" id="Os03t0424200-01">
    <property type="protein sequence ID" value="Os03t0424200-01"/>
    <property type="gene ID" value="Os03g0424200"/>
</dbReference>
<dbReference type="KEGG" id="dosa:Os03g0424200"/>
<dbReference type="eggNOG" id="ENOG502QQ1P">
    <property type="taxonomic scope" value="Eukaryota"/>
</dbReference>
<dbReference type="HOGENOM" id="CLU_000288_21_4_1"/>
<dbReference type="InParanoid" id="Q0DR28"/>
<dbReference type="OMA" id="CDRKTYE"/>
<dbReference type="UniPathway" id="UPA00143"/>
<dbReference type="Proteomes" id="UP000000763">
    <property type="component" value="Chromosome 3"/>
</dbReference>
<dbReference type="Proteomes" id="UP000059680">
    <property type="component" value="Chromosome 3"/>
</dbReference>
<dbReference type="GO" id="GO:0005524">
    <property type="term" value="F:ATP binding"/>
    <property type="evidence" value="ECO:0007669"/>
    <property type="project" value="InterPro"/>
</dbReference>
<dbReference type="GO" id="GO:0004672">
    <property type="term" value="F:protein kinase activity"/>
    <property type="evidence" value="ECO:0007669"/>
    <property type="project" value="InterPro"/>
</dbReference>
<dbReference type="GO" id="GO:0004842">
    <property type="term" value="F:ubiquitin-protein transferase activity"/>
    <property type="evidence" value="ECO:0000314"/>
    <property type="project" value="UniProtKB"/>
</dbReference>
<dbReference type="GO" id="GO:0016567">
    <property type="term" value="P:protein ubiquitination"/>
    <property type="evidence" value="ECO:0000314"/>
    <property type="project" value="UniProtKB"/>
</dbReference>
<dbReference type="CDD" id="cd16655">
    <property type="entry name" value="RING-Ubox_WDSUB1-like"/>
    <property type="match status" value="1"/>
</dbReference>
<dbReference type="FunFam" id="1.10.510.10:FF:000498">
    <property type="entry name" value="U-box domain-containing protein 51"/>
    <property type="match status" value="1"/>
</dbReference>
<dbReference type="FunFam" id="3.30.40.10:FF:000428">
    <property type="entry name" value="U-box domain-containing protein 54"/>
    <property type="match status" value="1"/>
</dbReference>
<dbReference type="Gene3D" id="3.10.20.90">
    <property type="entry name" value="Phosphatidylinositol 3-kinase Catalytic Subunit, Chain A, domain 1"/>
    <property type="match status" value="1"/>
</dbReference>
<dbReference type="Gene3D" id="3.30.200.20">
    <property type="entry name" value="Phosphorylase Kinase, domain 1"/>
    <property type="match status" value="1"/>
</dbReference>
<dbReference type="Gene3D" id="1.10.510.10">
    <property type="entry name" value="Transferase(Phosphotransferase) domain 1"/>
    <property type="match status" value="1"/>
</dbReference>
<dbReference type="Gene3D" id="3.30.40.10">
    <property type="entry name" value="Zinc/RING finger domain, C3HC4 (zinc finger)"/>
    <property type="match status" value="1"/>
</dbReference>
<dbReference type="InterPro" id="IPR011009">
    <property type="entry name" value="Kinase-like_dom_sf"/>
</dbReference>
<dbReference type="InterPro" id="IPR000719">
    <property type="entry name" value="Prot_kinase_dom"/>
</dbReference>
<dbReference type="InterPro" id="IPR008266">
    <property type="entry name" value="Tyr_kinase_AS"/>
</dbReference>
<dbReference type="InterPro" id="IPR051348">
    <property type="entry name" value="U-box_ubiquitin_ligases"/>
</dbReference>
<dbReference type="InterPro" id="IPR003613">
    <property type="entry name" value="Ubox_domain"/>
</dbReference>
<dbReference type="InterPro" id="IPR024729">
    <property type="entry name" value="USP7_ICP0-binding_dom"/>
</dbReference>
<dbReference type="InterPro" id="IPR013083">
    <property type="entry name" value="Znf_RING/FYVE/PHD"/>
</dbReference>
<dbReference type="PANTHER" id="PTHR45647">
    <property type="entry name" value="OS02G0152300 PROTEIN"/>
    <property type="match status" value="1"/>
</dbReference>
<dbReference type="PANTHER" id="PTHR45647:SF50">
    <property type="entry name" value="U-BOX DOMAIN-CONTAINING PROTEIN 57"/>
    <property type="match status" value="1"/>
</dbReference>
<dbReference type="Pfam" id="PF00069">
    <property type="entry name" value="Pkinase"/>
    <property type="match status" value="1"/>
</dbReference>
<dbReference type="Pfam" id="PF04564">
    <property type="entry name" value="U-box"/>
    <property type="match status" value="1"/>
</dbReference>
<dbReference type="Pfam" id="PF12436">
    <property type="entry name" value="USP7_ICP0_bdg"/>
    <property type="match status" value="1"/>
</dbReference>
<dbReference type="SMART" id="SM00504">
    <property type="entry name" value="Ubox"/>
    <property type="match status" value="1"/>
</dbReference>
<dbReference type="SUPFAM" id="SSF56112">
    <property type="entry name" value="Protein kinase-like (PK-like)"/>
    <property type="match status" value="1"/>
</dbReference>
<dbReference type="SUPFAM" id="SSF57850">
    <property type="entry name" value="RING/U-box"/>
    <property type="match status" value="1"/>
</dbReference>
<dbReference type="PROSITE" id="PS50011">
    <property type="entry name" value="PROTEIN_KINASE_DOM"/>
    <property type="match status" value="1"/>
</dbReference>
<dbReference type="PROSITE" id="PS00109">
    <property type="entry name" value="PROTEIN_KINASE_TYR"/>
    <property type="match status" value="1"/>
</dbReference>
<dbReference type="PROSITE" id="PS51698">
    <property type="entry name" value="U_BOX"/>
    <property type="match status" value="1"/>
</dbReference>
<gene>
    <name type="primary">PUB57</name>
    <name type="ordered locus">Os03g0424200</name>
    <name type="ordered locus">LOC_Os03g31070</name>
</gene>
<keyword id="KW-0175">Coiled coil</keyword>
<keyword id="KW-1185">Reference proteome</keyword>
<keyword id="KW-0808">Transferase</keyword>
<keyword id="KW-0833">Ubl conjugation pathway</keyword>
<evidence type="ECO:0000255" key="1"/>
<evidence type="ECO:0000255" key="2">
    <source>
        <dbReference type="PROSITE-ProRule" id="PRU00159"/>
    </source>
</evidence>
<evidence type="ECO:0000269" key="3">
    <source>
    </source>
</evidence>
<evidence type="ECO:0000305" key="4"/>